<name>YR476_MIMIV</name>
<dbReference type="EMBL" id="AY653733">
    <property type="protein sequence ID" value="AAV50742.1"/>
    <property type="molecule type" value="Genomic_DNA"/>
</dbReference>
<dbReference type="SMR" id="Q5UQE0"/>
<dbReference type="KEGG" id="vg:9925101"/>
<dbReference type="OrthoDB" id="3755at10239"/>
<dbReference type="Proteomes" id="UP000001134">
    <property type="component" value="Genome"/>
</dbReference>
<dbReference type="GO" id="GO:0005524">
    <property type="term" value="F:ATP binding"/>
    <property type="evidence" value="ECO:0007669"/>
    <property type="project" value="UniProtKB-KW"/>
</dbReference>
<dbReference type="GO" id="GO:0016887">
    <property type="term" value="F:ATP hydrolysis activity"/>
    <property type="evidence" value="ECO:0007669"/>
    <property type="project" value="InterPro"/>
</dbReference>
<dbReference type="GO" id="GO:0043001">
    <property type="term" value="P:Golgi to plasma membrane protein transport"/>
    <property type="evidence" value="ECO:0007669"/>
    <property type="project" value="TreeGrafter"/>
</dbReference>
<dbReference type="GO" id="GO:0006891">
    <property type="term" value="P:intra-Golgi vesicle-mediated transport"/>
    <property type="evidence" value="ECO:0007669"/>
    <property type="project" value="TreeGrafter"/>
</dbReference>
<dbReference type="GO" id="GO:0035494">
    <property type="term" value="P:SNARE complex disassembly"/>
    <property type="evidence" value="ECO:0007669"/>
    <property type="project" value="InterPro"/>
</dbReference>
<dbReference type="FunFam" id="1.10.8.60:FF:000115">
    <property type="entry name" value="N-ethylmaleimide-sensitive fusion protein, putative"/>
    <property type="match status" value="1"/>
</dbReference>
<dbReference type="FunFam" id="3.40.50.300:FF:000154">
    <property type="entry name" value="Vesicle-fusing ATPase 1"/>
    <property type="match status" value="1"/>
</dbReference>
<dbReference type="Gene3D" id="1.10.8.60">
    <property type="match status" value="1"/>
</dbReference>
<dbReference type="Gene3D" id="3.40.50.300">
    <property type="entry name" value="P-loop containing nucleotide triphosphate hydrolases"/>
    <property type="match status" value="1"/>
</dbReference>
<dbReference type="InterPro" id="IPR003593">
    <property type="entry name" value="AAA+_ATPase"/>
</dbReference>
<dbReference type="InterPro" id="IPR041569">
    <property type="entry name" value="AAA_lid_3"/>
</dbReference>
<dbReference type="InterPro" id="IPR003959">
    <property type="entry name" value="ATPase_AAA_core"/>
</dbReference>
<dbReference type="InterPro" id="IPR027417">
    <property type="entry name" value="P-loop_NTPase"/>
</dbReference>
<dbReference type="InterPro" id="IPR039812">
    <property type="entry name" value="Vesicle-fus_ATPase"/>
</dbReference>
<dbReference type="PANTHER" id="PTHR23078:SF3">
    <property type="entry name" value="VESICLE-FUSING ATPASE"/>
    <property type="match status" value="1"/>
</dbReference>
<dbReference type="PANTHER" id="PTHR23078">
    <property type="entry name" value="VESICULAR-FUSION PROTEIN NSF"/>
    <property type="match status" value="1"/>
</dbReference>
<dbReference type="Pfam" id="PF00004">
    <property type="entry name" value="AAA"/>
    <property type="match status" value="1"/>
</dbReference>
<dbReference type="Pfam" id="PF17862">
    <property type="entry name" value="AAA_lid_3"/>
    <property type="match status" value="1"/>
</dbReference>
<dbReference type="SMART" id="SM00382">
    <property type="entry name" value="AAA"/>
    <property type="match status" value="1"/>
</dbReference>
<dbReference type="SUPFAM" id="SSF52540">
    <property type="entry name" value="P-loop containing nucleoside triphosphate hydrolases"/>
    <property type="match status" value="1"/>
</dbReference>
<comment type="similarity">
    <text evidence="3">Belongs to the AAA ATPase family.</text>
</comment>
<organism>
    <name type="scientific">Acanthamoeba polyphaga mimivirus</name>
    <name type="common">APMV</name>
    <dbReference type="NCBI Taxonomy" id="212035"/>
    <lineage>
        <taxon>Viruses</taxon>
        <taxon>Varidnaviria</taxon>
        <taxon>Bamfordvirae</taxon>
        <taxon>Nucleocytoviricota</taxon>
        <taxon>Megaviricetes</taxon>
        <taxon>Imitervirales</taxon>
        <taxon>Mimiviridae</taxon>
        <taxon>Megamimivirinae</taxon>
        <taxon>Mimivirus</taxon>
        <taxon>Mimivirus bradfordmassiliense</taxon>
    </lineage>
</organism>
<sequence length="855" mass="97429">MNKRDFSELKNSESSEESSLVSSTETVRSSKRNKKFHKNNRQSNSFIISLNFTIRNDDDPFVYMKNPLSEFIKIGNFVYKTKSFVSLDKDYHDDNLDWKISLNRSQYDDVKDFIYDKNRVIVSSFTNEIQSSCFIKVELSTSTHYKFRVTKNELINYIVRTLNGHIVTIDQNIDIHYMGYPMTINIVNIGDDFIGKITGSTDVHFKNIDSNIVVMNQCIDISNKDVSVFLTKCISLNSNHDNNIRFPIIIDKKIINRYVKNTFDDTFTDNDYRTYTCDDIEYTFNIKVIGCNTQTKFKNTYKLLDDSSPIQIKSNTDNVILTSGKKKAKKICFYFQSSNKDSPSDNILFYNDLVDFITSKYNKITCNQSVKYLTGSKEIVLKADFISPHINDNTMYIIDSNTKISFNTDIKSSYFIAHNDKPTEIDTVTFKIKNNASGGLFSLMFGDDDSEKTVIFDSGKLEKTVRSKFPKRTVLKHKASIQYNGVTYQFVVQEIKFKEDSDNKSDNKSDNKSKNHLDKIKKKYTTYGIITSNTNIKFVPAKANKSYVINNSVEQTEISKNPVQELEKYVGGISKELETVVRTLCLSRGILKQEYLARGLRPVKGIILHGPPGTGKTSLSRNLGKILGCEGDRFRLMSGPEIFNKWVGGSESNIRAIFKPAKDAWKKHGDKSPVYMVVIDEIDAMLPSRSGSDGNPVRDSVVNQFLAEMDGLEVFNNLICIGITNRLELLDPATIRSGRFGIHIKIDLPDQEGRVKIFQIHTKKLQELNRLSDDVDISKLAVITEEFSGADIEGMVELASVYSLERLNKLDVINDDVINTHGLVTFEDFTKAAKEINHNKNKSDSTKDNINHMYL</sequence>
<gene>
    <name type="ordered locus">MIMI_R476</name>
</gene>
<protein>
    <recommendedName>
        <fullName>Putative AAA family ATPase R476</fullName>
    </recommendedName>
</protein>
<organismHost>
    <name type="scientific">Acanthamoeba polyphaga</name>
    <name type="common">Amoeba</name>
    <dbReference type="NCBI Taxonomy" id="5757"/>
</organismHost>
<feature type="chain" id="PRO_0000309203" description="Putative AAA family ATPase R476">
    <location>
        <begin position="1"/>
        <end position="855"/>
    </location>
</feature>
<feature type="region of interest" description="Disordered" evidence="2">
    <location>
        <begin position="1"/>
        <end position="37"/>
    </location>
</feature>
<feature type="compositionally biased region" description="Basic and acidic residues" evidence="2">
    <location>
        <begin position="1"/>
        <end position="13"/>
    </location>
</feature>
<feature type="compositionally biased region" description="Low complexity" evidence="2">
    <location>
        <begin position="17"/>
        <end position="27"/>
    </location>
</feature>
<feature type="binding site" evidence="1">
    <location>
        <begin position="610"/>
        <end position="617"/>
    </location>
    <ligand>
        <name>ATP</name>
        <dbReference type="ChEBI" id="CHEBI:30616"/>
    </ligand>
</feature>
<accession>Q5UQE0</accession>
<reference key="1">
    <citation type="journal article" date="2004" name="Science">
        <title>The 1.2-megabase genome sequence of Mimivirus.</title>
        <authorList>
            <person name="Raoult D."/>
            <person name="Audic S."/>
            <person name="Robert C."/>
            <person name="Abergel C."/>
            <person name="Renesto P."/>
            <person name="Ogata H."/>
            <person name="La Scola B."/>
            <person name="Susan M."/>
            <person name="Claverie J.-M."/>
        </authorList>
    </citation>
    <scope>NUCLEOTIDE SEQUENCE [LARGE SCALE GENOMIC DNA]</scope>
    <source>
        <strain>Rowbotham-Bradford</strain>
    </source>
</reference>
<proteinExistence type="inferred from homology"/>
<evidence type="ECO:0000255" key="1"/>
<evidence type="ECO:0000256" key="2">
    <source>
        <dbReference type="SAM" id="MobiDB-lite"/>
    </source>
</evidence>
<evidence type="ECO:0000305" key="3"/>
<keyword id="KW-0067">ATP-binding</keyword>
<keyword id="KW-0547">Nucleotide-binding</keyword>
<keyword id="KW-1185">Reference proteome</keyword>